<organism>
    <name type="scientific">Dactylis glomerata</name>
    <name type="common">Orchard grass</name>
    <name type="synonym">Cock's-foot grass</name>
    <dbReference type="NCBI Taxonomy" id="4509"/>
    <lineage>
        <taxon>Eukaryota</taxon>
        <taxon>Viridiplantae</taxon>
        <taxon>Streptophyta</taxon>
        <taxon>Embryophyta</taxon>
        <taxon>Tracheophyta</taxon>
        <taxon>Spermatophyta</taxon>
        <taxon>Magnoliopsida</taxon>
        <taxon>Liliopsida</taxon>
        <taxon>Poales</taxon>
        <taxon>Poaceae</taxon>
        <taxon>BOP clade</taxon>
        <taxon>Pooideae</taxon>
        <taxon>Poodae</taxon>
        <taxon>Poeae</taxon>
        <taxon>Poeae Chloroplast Group 2 (Poeae type)</taxon>
        <taxon>Loliodinae</taxon>
        <taxon>Dactylidinae</taxon>
        <taxon>Dactylis</taxon>
    </lineage>
</organism>
<name>PRO3_DACGL</name>
<proteinExistence type="evidence at protein level"/>
<sequence length="23" mass="2938">NVQLDPFFQEQQQYYQQQQAFFL</sequence>
<reference key="1">
    <citation type="journal article" date="1986" name="Biokhimiia">
        <title>Characterization of the N-terminal amino acid sequence of alpha-prolamine from Dactylis glomerata L.</title>
        <authorList>
            <person name="Vvedenskaya I.O."/>
            <person name="Shlyapnikov S.V."/>
            <person name="Konarev A.V."/>
        </authorList>
    </citation>
    <scope>PROTEIN SEQUENCE</scope>
</reference>
<keyword id="KW-0903">Direct protein sequencing</keyword>
<protein>
    <recommendedName>
        <fullName>Prolamin alpha-3</fullName>
    </recommendedName>
</protein>
<feature type="chain" id="PRO_0000102596" description="Prolamin alpha-3">
    <location>
        <begin position="1"/>
        <end position="23" status="greater than"/>
    </location>
</feature>
<feature type="non-terminal residue">
    <location>
        <position position="23"/>
    </location>
</feature>
<dbReference type="PIR" id="S02201">
    <property type="entry name" value="S02201"/>
</dbReference>
<accession>P18690</accession>